<name>RL332_STRP1</name>
<accession>Q48WA5</accession>
<feature type="chain" id="PRO_0000356717" description="Large ribosomal subunit protein bL33B">
    <location>
        <begin position="1"/>
        <end position="50"/>
    </location>
</feature>
<organism>
    <name type="scientific">Streptococcus pyogenes serotype M1</name>
    <dbReference type="NCBI Taxonomy" id="301447"/>
    <lineage>
        <taxon>Bacteria</taxon>
        <taxon>Bacillati</taxon>
        <taxon>Bacillota</taxon>
        <taxon>Bacilli</taxon>
        <taxon>Lactobacillales</taxon>
        <taxon>Streptococcaceae</taxon>
        <taxon>Streptococcus</taxon>
    </lineage>
</organism>
<gene>
    <name evidence="1" type="primary">rpmG2</name>
    <name type="ordered locus">SPy_2058.1</name>
    <name type="ordered locus">M5005_Spy1752</name>
</gene>
<dbReference type="EMBL" id="AE004092">
    <property type="status" value="NOT_ANNOTATED_CDS"/>
    <property type="molecule type" value="Genomic_DNA"/>
</dbReference>
<dbReference type="EMBL" id="CP000017">
    <property type="protein sequence ID" value="AAZ52370.1"/>
    <property type="molecule type" value="Genomic_DNA"/>
</dbReference>
<dbReference type="SMR" id="Q48WA5"/>
<dbReference type="PaxDb" id="1314-HKU360_01866"/>
<dbReference type="KEGG" id="spz:M5005_Spy1752"/>
<dbReference type="HOGENOM" id="CLU_190949_0_1_9"/>
<dbReference type="OMA" id="KFCKYCQ"/>
<dbReference type="PRO" id="PR:Q48WA5"/>
<dbReference type="Proteomes" id="UP000000750">
    <property type="component" value="Chromosome"/>
</dbReference>
<dbReference type="GO" id="GO:0005737">
    <property type="term" value="C:cytoplasm"/>
    <property type="evidence" value="ECO:0007669"/>
    <property type="project" value="UniProtKB-ARBA"/>
</dbReference>
<dbReference type="GO" id="GO:1990904">
    <property type="term" value="C:ribonucleoprotein complex"/>
    <property type="evidence" value="ECO:0007669"/>
    <property type="project" value="UniProtKB-KW"/>
</dbReference>
<dbReference type="GO" id="GO:0005840">
    <property type="term" value="C:ribosome"/>
    <property type="evidence" value="ECO:0007669"/>
    <property type="project" value="UniProtKB-KW"/>
</dbReference>
<dbReference type="GO" id="GO:0003735">
    <property type="term" value="F:structural constituent of ribosome"/>
    <property type="evidence" value="ECO:0007669"/>
    <property type="project" value="InterPro"/>
</dbReference>
<dbReference type="GO" id="GO:0006412">
    <property type="term" value="P:translation"/>
    <property type="evidence" value="ECO:0007669"/>
    <property type="project" value="UniProtKB-UniRule"/>
</dbReference>
<dbReference type="Gene3D" id="2.20.28.120">
    <property type="entry name" value="Ribosomal protein L33"/>
    <property type="match status" value="1"/>
</dbReference>
<dbReference type="HAMAP" id="MF_00294">
    <property type="entry name" value="Ribosomal_bL33"/>
    <property type="match status" value="1"/>
</dbReference>
<dbReference type="InterPro" id="IPR001705">
    <property type="entry name" value="Ribosomal_bL33"/>
</dbReference>
<dbReference type="InterPro" id="IPR038584">
    <property type="entry name" value="Ribosomal_bL33_sf"/>
</dbReference>
<dbReference type="InterPro" id="IPR011332">
    <property type="entry name" value="Ribosomal_zn-bd"/>
</dbReference>
<dbReference type="NCBIfam" id="NF001764">
    <property type="entry name" value="PRK00504.1"/>
    <property type="match status" value="1"/>
</dbReference>
<dbReference type="NCBIfam" id="TIGR01023">
    <property type="entry name" value="rpmG_bact"/>
    <property type="match status" value="1"/>
</dbReference>
<dbReference type="Pfam" id="PF00471">
    <property type="entry name" value="Ribosomal_L33"/>
    <property type="match status" value="1"/>
</dbReference>
<dbReference type="SUPFAM" id="SSF57829">
    <property type="entry name" value="Zn-binding ribosomal proteins"/>
    <property type="match status" value="1"/>
</dbReference>
<sequence length="50" mass="5658">MAQKKASLACVECGSRNYSIGVSSTPKPTRLEVNKFCKYCKTYTLHKETR</sequence>
<keyword id="KW-1185">Reference proteome</keyword>
<keyword id="KW-0687">Ribonucleoprotein</keyword>
<keyword id="KW-0689">Ribosomal protein</keyword>
<comment type="similarity">
    <text evidence="1">Belongs to the bacterial ribosomal protein bL33 family.</text>
</comment>
<evidence type="ECO:0000255" key="1">
    <source>
        <dbReference type="HAMAP-Rule" id="MF_00294"/>
    </source>
</evidence>
<protein>
    <recommendedName>
        <fullName evidence="1">Large ribosomal subunit protein bL33B</fullName>
    </recommendedName>
    <alternativeName>
        <fullName evidence="1">50S ribosomal protein L33 2</fullName>
    </alternativeName>
</protein>
<reference key="1">
    <citation type="journal article" date="2001" name="Proc. Natl. Acad. Sci. U.S.A.">
        <title>Complete genome sequence of an M1 strain of Streptococcus pyogenes.</title>
        <authorList>
            <person name="Ferretti J.J."/>
            <person name="McShan W.M."/>
            <person name="Ajdic D.J."/>
            <person name="Savic D.J."/>
            <person name="Savic G."/>
            <person name="Lyon K."/>
            <person name="Primeaux C."/>
            <person name="Sezate S."/>
            <person name="Suvorov A.N."/>
            <person name="Kenton S."/>
            <person name="Lai H.S."/>
            <person name="Lin S.P."/>
            <person name="Qian Y."/>
            <person name="Jia H.G."/>
            <person name="Najar F.Z."/>
            <person name="Ren Q."/>
            <person name="Zhu H."/>
            <person name="Song L."/>
            <person name="White J."/>
            <person name="Yuan X."/>
            <person name="Clifton S.W."/>
            <person name="Roe B.A."/>
            <person name="McLaughlin R.E."/>
        </authorList>
    </citation>
    <scope>NUCLEOTIDE SEQUENCE [LARGE SCALE GENOMIC DNA]</scope>
    <source>
        <strain>ATCC 700294 / SF370 / Serotype M1</strain>
    </source>
</reference>
<reference key="2">
    <citation type="journal article" date="2005" name="J. Infect. Dis.">
        <title>Evolutionary origin and emergence of a highly successful clone of serotype M1 group A Streptococcus involved multiple horizontal gene transfer events.</title>
        <authorList>
            <person name="Sumby P."/>
            <person name="Porcella S.F."/>
            <person name="Madrigal A.G."/>
            <person name="Barbian K.D."/>
            <person name="Virtaneva K."/>
            <person name="Ricklefs S.M."/>
            <person name="Sturdevant D.E."/>
            <person name="Graham M.R."/>
            <person name="Vuopio-Varkila J."/>
            <person name="Hoe N.P."/>
            <person name="Musser J.M."/>
        </authorList>
    </citation>
    <scope>NUCLEOTIDE SEQUENCE [LARGE SCALE GENOMIC DNA]</scope>
    <source>
        <strain>ATCC BAA-947 / MGAS5005 / Serotype M1</strain>
    </source>
</reference>
<proteinExistence type="inferred from homology"/>